<reference key="1">
    <citation type="journal article" date="1992" name="J. Bacteriol.">
        <title>Sequence organization and regulation of the Bacillus subtilis menBE operon.</title>
        <authorList>
            <person name="Driscoll J.R."/>
            <person name="Taber H.W."/>
        </authorList>
    </citation>
    <scope>NUCLEOTIDE SEQUENCE [GENOMIC DNA]</scope>
    <source>
        <strain>168 / RB1</strain>
    </source>
</reference>
<reference key="2">
    <citation type="journal article" date="1995" name="Gene">
        <title>Structural organization of a Bacillus subtilis operon encoding menaquinone biosynthetic enzymes.</title>
        <authorList>
            <person name="Rowland B."/>
            <person name="Hill K."/>
            <person name="Miller P."/>
            <person name="Driscoll J.R."/>
            <person name="Taber H.W."/>
        </authorList>
    </citation>
    <scope>NUCLEOTIDE SEQUENCE [GENOMIC DNA]</scope>
    <source>
        <strain>168 / RB1</strain>
    </source>
</reference>
<reference key="3">
    <citation type="journal article" date="1997" name="Microbiology">
        <title>Sequencing and functional annotation of the Bacillus subtilis genes in the 200 kb rrnB-dnaB region.</title>
        <authorList>
            <person name="Lapidus A."/>
            <person name="Galleron N."/>
            <person name="Sorokin A."/>
            <person name="Ehrlich S.D."/>
        </authorList>
    </citation>
    <scope>NUCLEOTIDE SEQUENCE [GENOMIC DNA]</scope>
    <source>
        <strain>168</strain>
    </source>
</reference>
<reference key="4">
    <citation type="journal article" date="1997" name="Nature">
        <title>The complete genome sequence of the Gram-positive bacterium Bacillus subtilis.</title>
        <authorList>
            <person name="Kunst F."/>
            <person name="Ogasawara N."/>
            <person name="Moszer I."/>
            <person name="Albertini A.M."/>
            <person name="Alloni G."/>
            <person name="Azevedo V."/>
            <person name="Bertero M.G."/>
            <person name="Bessieres P."/>
            <person name="Bolotin A."/>
            <person name="Borchert S."/>
            <person name="Borriss R."/>
            <person name="Boursier L."/>
            <person name="Brans A."/>
            <person name="Braun M."/>
            <person name="Brignell S.C."/>
            <person name="Bron S."/>
            <person name="Brouillet S."/>
            <person name="Bruschi C.V."/>
            <person name="Caldwell B."/>
            <person name="Capuano V."/>
            <person name="Carter N.M."/>
            <person name="Choi S.-K."/>
            <person name="Codani J.-J."/>
            <person name="Connerton I.F."/>
            <person name="Cummings N.J."/>
            <person name="Daniel R.A."/>
            <person name="Denizot F."/>
            <person name="Devine K.M."/>
            <person name="Duesterhoeft A."/>
            <person name="Ehrlich S.D."/>
            <person name="Emmerson P.T."/>
            <person name="Entian K.-D."/>
            <person name="Errington J."/>
            <person name="Fabret C."/>
            <person name="Ferrari E."/>
            <person name="Foulger D."/>
            <person name="Fritz C."/>
            <person name="Fujita M."/>
            <person name="Fujita Y."/>
            <person name="Fuma S."/>
            <person name="Galizzi A."/>
            <person name="Galleron N."/>
            <person name="Ghim S.-Y."/>
            <person name="Glaser P."/>
            <person name="Goffeau A."/>
            <person name="Golightly E.J."/>
            <person name="Grandi G."/>
            <person name="Guiseppi G."/>
            <person name="Guy B.J."/>
            <person name="Haga K."/>
            <person name="Haiech J."/>
            <person name="Harwood C.R."/>
            <person name="Henaut A."/>
            <person name="Hilbert H."/>
            <person name="Holsappel S."/>
            <person name="Hosono S."/>
            <person name="Hullo M.-F."/>
            <person name="Itaya M."/>
            <person name="Jones L.-M."/>
            <person name="Joris B."/>
            <person name="Karamata D."/>
            <person name="Kasahara Y."/>
            <person name="Klaerr-Blanchard M."/>
            <person name="Klein C."/>
            <person name="Kobayashi Y."/>
            <person name="Koetter P."/>
            <person name="Koningstein G."/>
            <person name="Krogh S."/>
            <person name="Kumano M."/>
            <person name="Kurita K."/>
            <person name="Lapidus A."/>
            <person name="Lardinois S."/>
            <person name="Lauber J."/>
            <person name="Lazarevic V."/>
            <person name="Lee S.-M."/>
            <person name="Levine A."/>
            <person name="Liu H."/>
            <person name="Masuda S."/>
            <person name="Mauel C."/>
            <person name="Medigue C."/>
            <person name="Medina N."/>
            <person name="Mellado R.P."/>
            <person name="Mizuno M."/>
            <person name="Moestl D."/>
            <person name="Nakai S."/>
            <person name="Noback M."/>
            <person name="Noone D."/>
            <person name="O'Reilly M."/>
            <person name="Ogawa K."/>
            <person name="Ogiwara A."/>
            <person name="Oudega B."/>
            <person name="Park S.-H."/>
            <person name="Parro V."/>
            <person name="Pohl T.M."/>
            <person name="Portetelle D."/>
            <person name="Porwollik S."/>
            <person name="Prescott A.M."/>
            <person name="Presecan E."/>
            <person name="Pujic P."/>
            <person name="Purnelle B."/>
            <person name="Rapoport G."/>
            <person name="Rey M."/>
            <person name="Reynolds S."/>
            <person name="Rieger M."/>
            <person name="Rivolta C."/>
            <person name="Rocha E."/>
            <person name="Roche B."/>
            <person name="Rose M."/>
            <person name="Sadaie Y."/>
            <person name="Sato T."/>
            <person name="Scanlan E."/>
            <person name="Schleich S."/>
            <person name="Schroeter R."/>
            <person name="Scoffone F."/>
            <person name="Sekiguchi J."/>
            <person name="Sekowska A."/>
            <person name="Seror S.J."/>
            <person name="Serror P."/>
            <person name="Shin B.-S."/>
            <person name="Soldo B."/>
            <person name="Sorokin A."/>
            <person name="Tacconi E."/>
            <person name="Takagi T."/>
            <person name="Takahashi H."/>
            <person name="Takemaru K."/>
            <person name="Takeuchi M."/>
            <person name="Tamakoshi A."/>
            <person name="Tanaka T."/>
            <person name="Terpstra P."/>
            <person name="Tognoni A."/>
            <person name="Tosato V."/>
            <person name="Uchiyama S."/>
            <person name="Vandenbol M."/>
            <person name="Vannier F."/>
            <person name="Vassarotti A."/>
            <person name="Viari A."/>
            <person name="Wambutt R."/>
            <person name="Wedler E."/>
            <person name="Wedler H."/>
            <person name="Weitzenegger T."/>
            <person name="Winters P."/>
            <person name="Wipat A."/>
            <person name="Yamamoto H."/>
            <person name="Yamane K."/>
            <person name="Yasumoto K."/>
            <person name="Yata K."/>
            <person name="Yoshida K."/>
            <person name="Yoshikawa H.-F."/>
            <person name="Zumstein E."/>
            <person name="Yoshikawa H."/>
            <person name="Danchin A."/>
        </authorList>
    </citation>
    <scope>NUCLEOTIDE SEQUENCE [LARGE SCALE GENOMIC DNA]</scope>
    <source>
        <strain>168</strain>
    </source>
</reference>
<proteinExistence type="evidence at protein level"/>
<feature type="chain" id="PRO_0000193159" description="2-succinylbenzoate--CoA ligase">
    <location>
        <begin position="1"/>
        <end position="486"/>
    </location>
</feature>
<feature type="sequence conflict" description="In Ref. 1; AAA50402 and 2; AAC37017." evidence="2" ref="1 2">
    <original>VSSALNL</original>
    <variation>CRPLLF</variation>
    <location>
        <begin position="174"/>
        <end position="180"/>
    </location>
</feature>
<feature type="sequence conflict" description="In Ref. 1; AAA50402 and 2; AAC37017." evidence="2" ref="1 2">
    <original>RWLIALPLF</original>
    <variation>AGLCIAAL</variation>
    <location>
        <begin position="187"/>
        <end position="195"/>
    </location>
</feature>
<feature type="strand" evidence="6">
    <location>
        <begin position="4"/>
        <end position="6"/>
    </location>
</feature>
<feature type="helix" evidence="6">
    <location>
        <begin position="8"/>
        <end position="15"/>
    </location>
</feature>
<feature type="strand" evidence="6">
    <location>
        <begin position="19"/>
        <end position="24"/>
    </location>
</feature>
<feature type="strand" evidence="6">
    <location>
        <begin position="27"/>
        <end position="30"/>
    </location>
</feature>
<feature type="helix" evidence="6">
    <location>
        <begin position="31"/>
        <end position="47"/>
    </location>
</feature>
<feature type="strand" evidence="6">
    <location>
        <begin position="55"/>
        <end position="58"/>
    </location>
</feature>
<feature type="helix" evidence="6">
    <location>
        <begin position="64"/>
        <end position="76"/>
    </location>
</feature>
<feature type="strand" evidence="6">
    <location>
        <begin position="79"/>
        <end position="82"/>
    </location>
</feature>
<feature type="helix" evidence="6">
    <location>
        <begin position="89"/>
        <end position="98"/>
    </location>
</feature>
<feature type="strand" evidence="6">
    <location>
        <begin position="102"/>
        <end position="106"/>
    </location>
</feature>
<feature type="helix" evidence="6">
    <location>
        <begin position="112"/>
        <end position="115"/>
    </location>
</feature>
<feature type="turn" evidence="6">
    <location>
        <begin position="116"/>
        <end position="118"/>
    </location>
</feature>
<feature type="strand" evidence="6">
    <location>
        <begin position="119"/>
        <end position="123"/>
    </location>
</feature>
<feature type="helix" evidence="6">
    <location>
        <begin position="124"/>
        <end position="127"/>
    </location>
</feature>
<feature type="strand" evidence="6">
    <location>
        <begin position="140"/>
        <end position="142"/>
    </location>
</feature>
<feature type="strand" evidence="6">
    <location>
        <begin position="145"/>
        <end position="152"/>
    </location>
</feature>
<feature type="strand" evidence="5">
    <location>
        <begin position="155"/>
        <end position="158"/>
    </location>
</feature>
<feature type="strand" evidence="6">
    <location>
        <begin position="160"/>
        <end position="165"/>
    </location>
</feature>
<feature type="helix" evidence="6">
    <location>
        <begin position="166"/>
        <end position="180"/>
    </location>
</feature>
<feature type="strand" evidence="6">
    <location>
        <begin position="187"/>
        <end position="190"/>
    </location>
</feature>
<feature type="helix" evidence="6">
    <location>
        <begin position="197"/>
        <end position="209"/>
    </location>
</feature>
<feature type="strand" evidence="6">
    <location>
        <begin position="212"/>
        <end position="215"/>
    </location>
</feature>
<feature type="helix" evidence="6">
    <location>
        <begin position="221"/>
        <end position="231"/>
    </location>
</feature>
<feature type="strand" evidence="6">
    <location>
        <begin position="235"/>
        <end position="238"/>
    </location>
</feature>
<feature type="helix" evidence="6">
    <location>
        <begin position="240"/>
        <end position="249"/>
    </location>
</feature>
<feature type="strand" evidence="6">
    <location>
        <begin position="259"/>
        <end position="262"/>
    </location>
</feature>
<feature type="helix" evidence="6">
    <location>
        <begin position="269"/>
        <end position="277"/>
    </location>
</feature>
<feature type="strand" evidence="6">
    <location>
        <begin position="282"/>
        <end position="288"/>
    </location>
</feature>
<feature type="helix" evidence="6">
    <location>
        <begin position="289"/>
        <end position="291"/>
    </location>
</feature>
<feature type="strand" evidence="6">
    <location>
        <begin position="293"/>
        <end position="298"/>
    </location>
</feature>
<feature type="helix" evidence="6">
    <location>
        <begin position="300"/>
        <end position="302"/>
    </location>
</feature>
<feature type="turn" evidence="6">
    <location>
        <begin position="303"/>
        <end position="308"/>
    </location>
</feature>
<feature type="strand" evidence="6">
    <location>
        <begin position="311"/>
        <end position="313"/>
    </location>
</feature>
<feature type="strand" evidence="6">
    <location>
        <begin position="318"/>
        <end position="323"/>
    </location>
</feature>
<feature type="strand" evidence="6">
    <location>
        <begin position="334"/>
        <end position="340"/>
    </location>
</feature>
<feature type="strand" evidence="6">
    <location>
        <begin position="345"/>
        <end position="347"/>
    </location>
</feature>
<feature type="helix" evidence="6">
    <location>
        <begin position="351"/>
        <end position="357"/>
    </location>
</feature>
<feature type="strand" evidence="4">
    <location>
        <begin position="358"/>
        <end position="361"/>
    </location>
</feature>
<feature type="strand" evidence="6">
    <location>
        <begin position="362"/>
        <end position="371"/>
    </location>
</feature>
<feature type="strand" evidence="6">
    <location>
        <begin position="377"/>
        <end position="380"/>
    </location>
</feature>
<feature type="helix" evidence="3">
    <location>
        <begin position="383"/>
        <end position="385"/>
    </location>
</feature>
<feature type="strand" evidence="6">
    <location>
        <begin position="387"/>
        <end position="389"/>
    </location>
</feature>
<feature type="strand" evidence="6">
    <location>
        <begin position="392"/>
        <end position="394"/>
    </location>
</feature>
<feature type="helix" evidence="6">
    <location>
        <begin position="396"/>
        <end position="405"/>
    </location>
</feature>
<feature type="strand" evidence="6">
    <location>
        <begin position="409"/>
        <end position="419"/>
    </location>
</feature>
<feature type="turn" evidence="6">
    <location>
        <begin position="420"/>
        <end position="422"/>
    </location>
</feature>
<feature type="strand" evidence="6">
    <location>
        <begin position="423"/>
        <end position="434"/>
    </location>
</feature>
<feature type="helix" evidence="6">
    <location>
        <begin position="438"/>
        <end position="446"/>
    </location>
</feature>
<feature type="helix" evidence="6">
    <location>
        <begin position="451"/>
        <end position="453"/>
    </location>
</feature>
<feature type="strand" evidence="6">
    <location>
        <begin position="456"/>
        <end position="460"/>
    </location>
</feature>
<feature type="helix" evidence="6">
    <location>
        <begin position="474"/>
        <end position="476"/>
    </location>
</feature>
<feature type="helix" evidence="3">
    <location>
        <begin position="478"/>
        <end position="480"/>
    </location>
</feature>
<evidence type="ECO:0000255" key="1">
    <source>
        <dbReference type="HAMAP-Rule" id="MF_00731"/>
    </source>
</evidence>
<evidence type="ECO:0000305" key="2"/>
<evidence type="ECO:0007829" key="3">
    <source>
        <dbReference type="PDB" id="5BUQ"/>
    </source>
</evidence>
<evidence type="ECO:0007829" key="4">
    <source>
        <dbReference type="PDB" id="5BUR"/>
    </source>
</evidence>
<evidence type="ECO:0007829" key="5">
    <source>
        <dbReference type="PDB" id="5BUS"/>
    </source>
</evidence>
<evidence type="ECO:0007829" key="6">
    <source>
        <dbReference type="PDB" id="5X8F"/>
    </source>
</evidence>
<sequence length="486" mass="54190">MLTEQPNWLMQRAQLTPERIALIYEDQTVTFAELFAASKRMAEQLAAHSVRKGDTAAILLQNRAEMVYAVHACFLLGVKAVLLNTKLSTHERLFQLEDSGSGFLLTDSSFEKKEYEHIVQTIDVDELMKEAAEEIEIEAYMQMDATATLMYTSGTTGKPKGVQQTFGNHYFSAVSSALNLGITEQDRWLIALPLFHISGLSALFKSVIYGMTVVLHQRFSVSDVLHSINRHEVTMISAVQTMLASLLEETNRCPESIRCILLGGGPAPLPLLEECREKGFPVFQSYGMTETCSQIVTLSPEFSMEKLGSAGKPLFSCEIKIERDGQVCEPYEHGEIMVKGPNVMKSYFNRESANEASFQNGWLKTGDLGYLDNEGFLYVLDRRSDLIISGGENIYPAEVESVLLSHPAVAEAGVSGAEDKKWGKVPHAYLVLHKPVSAGELTDYCKERLAKYKIPAKFFVLDRLPRNASNKLLRNQLKDARKGELL</sequence>
<name>MENE_BACSU</name>
<gene>
    <name evidence="1" type="primary">menE</name>
    <name type="ordered locus">BSU30790</name>
</gene>
<accession>P23971</accession>
<accession>O34837</accession>
<keyword id="KW-0002">3D-structure</keyword>
<keyword id="KW-0067">ATP-binding</keyword>
<keyword id="KW-0436">Ligase</keyword>
<keyword id="KW-0474">Menaquinone biosynthesis</keyword>
<keyword id="KW-0547">Nucleotide-binding</keyword>
<keyword id="KW-1185">Reference proteome</keyword>
<dbReference type="EC" id="6.2.1.26" evidence="1"/>
<dbReference type="EMBL" id="M74521">
    <property type="protein sequence ID" value="AAA50402.1"/>
    <property type="status" value="ALT_FRAME"/>
    <property type="molecule type" value="Genomic_DNA"/>
</dbReference>
<dbReference type="EMBL" id="M74538">
    <property type="protein sequence ID" value="AAC37017.1"/>
    <property type="status" value="ALT_FRAME"/>
    <property type="molecule type" value="Genomic_DNA"/>
</dbReference>
<dbReference type="EMBL" id="AF008220">
    <property type="protein sequence ID" value="AAC00227.1"/>
    <property type="molecule type" value="Genomic_DNA"/>
</dbReference>
<dbReference type="EMBL" id="AL009126">
    <property type="protein sequence ID" value="CAB15057.1"/>
    <property type="molecule type" value="Genomic_DNA"/>
</dbReference>
<dbReference type="PIR" id="H69656">
    <property type="entry name" value="H69656"/>
</dbReference>
<dbReference type="RefSeq" id="NP_390957.1">
    <property type="nucleotide sequence ID" value="NC_000964.3"/>
</dbReference>
<dbReference type="RefSeq" id="WP_003229056.1">
    <property type="nucleotide sequence ID" value="NZ_OZ025638.1"/>
</dbReference>
<dbReference type="PDB" id="5BUQ">
    <property type="method" value="X-ray"/>
    <property type="resolution" value="1.98 A"/>
    <property type="chains" value="A/B=1-486"/>
</dbReference>
<dbReference type="PDB" id="5BUR">
    <property type="method" value="X-ray"/>
    <property type="resolution" value="2.82 A"/>
    <property type="chains" value="A/B=1-486"/>
</dbReference>
<dbReference type="PDB" id="5BUS">
    <property type="method" value="X-ray"/>
    <property type="resolution" value="2.60 A"/>
    <property type="chains" value="A/B=1-486"/>
</dbReference>
<dbReference type="PDB" id="5GTD">
    <property type="method" value="X-ray"/>
    <property type="resolution" value="2.69 A"/>
    <property type="chains" value="A/B=1-486"/>
</dbReference>
<dbReference type="PDB" id="5X8F">
    <property type="method" value="X-ray"/>
    <property type="resolution" value="1.76 A"/>
    <property type="chains" value="A/B/C/D=2-486"/>
</dbReference>
<dbReference type="PDB" id="5X8G">
    <property type="method" value="X-ray"/>
    <property type="resolution" value="1.90 A"/>
    <property type="chains" value="A/B/C/D=2-486"/>
</dbReference>
<dbReference type="PDBsum" id="5BUQ"/>
<dbReference type="PDBsum" id="5BUR"/>
<dbReference type="PDBsum" id="5BUS"/>
<dbReference type="PDBsum" id="5GTD"/>
<dbReference type="PDBsum" id="5X8F"/>
<dbReference type="PDBsum" id="5X8G"/>
<dbReference type="SMR" id="P23971"/>
<dbReference type="FunCoup" id="P23971">
    <property type="interactions" value="160"/>
</dbReference>
<dbReference type="STRING" id="224308.BSU30790"/>
<dbReference type="PaxDb" id="224308-BSU30790"/>
<dbReference type="EnsemblBacteria" id="CAB15057">
    <property type="protein sequence ID" value="CAB15057"/>
    <property type="gene ID" value="BSU_30790"/>
</dbReference>
<dbReference type="GeneID" id="937132"/>
<dbReference type="KEGG" id="bsu:BSU30790"/>
<dbReference type="PATRIC" id="fig|224308.179.peg.3337"/>
<dbReference type="eggNOG" id="COG0318">
    <property type="taxonomic scope" value="Bacteria"/>
</dbReference>
<dbReference type="InParanoid" id="P23971"/>
<dbReference type="OrthoDB" id="9762242at2"/>
<dbReference type="PhylomeDB" id="P23971"/>
<dbReference type="BioCyc" id="BSUB:BSU30790-MONOMER"/>
<dbReference type="BioCyc" id="MetaCyc:MONOMER-13811"/>
<dbReference type="BRENDA" id="6.2.1.26">
    <property type="organism ID" value="658"/>
</dbReference>
<dbReference type="UniPathway" id="UPA00079"/>
<dbReference type="UniPathway" id="UPA01057">
    <property type="reaction ID" value="UER00166"/>
</dbReference>
<dbReference type="EvolutionaryTrace" id="P23971"/>
<dbReference type="Proteomes" id="UP000001570">
    <property type="component" value="Chromosome"/>
</dbReference>
<dbReference type="GO" id="GO:0005524">
    <property type="term" value="F:ATP binding"/>
    <property type="evidence" value="ECO:0007669"/>
    <property type="project" value="UniProtKB-KW"/>
</dbReference>
<dbReference type="GO" id="GO:0016405">
    <property type="term" value="F:CoA-ligase activity"/>
    <property type="evidence" value="ECO:0000318"/>
    <property type="project" value="GO_Central"/>
</dbReference>
<dbReference type="GO" id="GO:0008756">
    <property type="term" value="F:o-succinylbenzoate-CoA ligase activity"/>
    <property type="evidence" value="ECO:0007669"/>
    <property type="project" value="UniProtKB-UniRule"/>
</dbReference>
<dbReference type="GO" id="GO:0009234">
    <property type="term" value="P:menaquinone biosynthetic process"/>
    <property type="evidence" value="ECO:0007669"/>
    <property type="project" value="UniProtKB-UniRule"/>
</dbReference>
<dbReference type="CDD" id="cd05912">
    <property type="entry name" value="OSB_CoA_lg"/>
    <property type="match status" value="1"/>
</dbReference>
<dbReference type="Gene3D" id="3.30.300.30">
    <property type="match status" value="1"/>
</dbReference>
<dbReference type="Gene3D" id="3.40.50.12780">
    <property type="entry name" value="N-terminal domain of ligase-like"/>
    <property type="match status" value="1"/>
</dbReference>
<dbReference type="HAMAP" id="MF_00731">
    <property type="entry name" value="MenE"/>
    <property type="match status" value="1"/>
</dbReference>
<dbReference type="InterPro" id="IPR025110">
    <property type="entry name" value="AMP-bd_C"/>
</dbReference>
<dbReference type="InterPro" id="IPR045851">
    <property type="entry name" value="AMP-bd_C_sf"/>
</dbReference>
<dbReference type="InterPro" id="IPR020845">
    <property type="entry name" value="AMP-binding_CS"/>
</dbReference>
<dbReference type="InterPro" id="IPR000873">
    <property type="entry name" value="AMP-dep_synth/lig_dom"/>
</dbReference>
<dbReference type="InterPro" id="IPR042099">
    <property type="entry name" value="ANL_N_sf"/>
</dbReference>
<dbReference type="InterPro" id="IPR050237">
    <property type="entry name" value="ATP-dep_AMP-bd_enzyme"/>
</dbReference>
<dbReference type="InterPro" id="IPR010192">
    <property type="entry name" value="MenE"/>
</dbReference>
<dbReference type="NCBIfam" id="TIGR01923">
    <property type="entry name" value="menE"/>
    <property type="match status" value="1"/>
</dbReference>
<dbReference type="NCBIfam" id="NF002966">
    <property type="entry name" value="PRK03640.1"/>
    <property type="match status" value="1"/>
</dbReference>
<dbReference type="PANTHER" id="PTHR43767">
    <property type="entry name" value="LONG-CHAIN-FATTY-ACID--COA LIGASE"/>
    <property type="match status" value="1"/>
</dbReference>
<dbReference type="PANTHER" id="PTHR43767:SF1">
    <property type="entry name" value="NONRIBOSOMAL PEPTIDE SYNTHASE PES1 (EUROFUNG)-RELATED"/>
    <property type="match status" value="1"/>
</dbReference>
<dbReference type="Pfam" id="PF00501">
    <property type="entry name" value="AMP-binding"/>
    <property type="match status" value="1"/>
</dbReference>
<dbReference type="Pfam" id="PF13193">
    <property type="entry name" value="AMP-binding_C"/>
    <property type="match status" value="1"/>
</dbReference>
<dbReference type="SUPFAM" id="SSF56801">
    <property type="entry name" value="Acetyl-CoA synthetase-like"/>
    <property type="match status" value="1"/>
</dbReference>
<dbReference type="PROSITE" id="PS00455">
    <property type="entry name" value="AMP_BINDING"/>
    <property type="match status" value="1"/>
</dbReference>
<organism>
    <name type="scientific">Bacillus subtilis (strain 168)</name>
    <dbReference type="NCBI Taxonomy" id="224308"/>
    <lineage>
        <taxon>Bacteria</taxon>
        <taxon>Bacillati</taxon>
        <taxon>Bacillota</taxon>
        <taxon>Bacilli</taxon>
        <taxon>Bacillales</taxon>
        <taxon>Bacillaceae</taxon>
        <taxon>Bacillus</taxon>
    </lineage>
</organism>
<comment type="function">
    <text evidence="1">Converts 2-succinylbenzoate (OSB) to 2-succinylbenzoyl-CoA (OSB-CoA).</text>
</comment>
<comment type="catalytic activity">
    <reaction evidence="1">
        <text>2-succinylbenzoate + ATP + CoA = 2-succinylbenzoyl-CoA + AMP + diphosphate</text>
        <dbReference type="Rhea" id="RHEA:17009"/>
        <dbReference type="ChEBI" id="CHEBI:18325"/>
        <dbReference type="ChEBI" id="CHEBI:30616"/>
        <dbReference type="ChEBI" id="CHEBI:33019"/>
        <dbReference type="ChEBI" id="CHEBI:57287"/>
        <dbReference type="ChEBI" id="CHEBI:57364"/>
        <dbReference type="ChEBI" id="CHEBI:456215"/>
        <dbReference type="EC" id="6.2.1.26"/>
    </reaction>
</comment>
<comment type="pathway">
    <text evidence="1">Quinol/quinone metabolism; 1,4-dihydroxy-2-naphthoate biosynthesis; 1,4-dihydroxy-2-naphthoate from chorismate: step 5/7.</text>
</comment>
<comment type="pathway">
    <text evidence="1">Quinol/quinone metabolism; menaquinone biosynthesis.</text>
</comment>
<comment type="similarity">
    <text evidence="1 2">Belongs to the ATP-dependent AMP-binding enzyme family. MenE subfamily.</text>
</comment>
<comment type="sequence caution" evidence="2">
    <conflict type="frameshift">
        <sequence resource="EMBL-CDS" id="AAA50402"/>
    </conflict>
</comment>
<comment type="sequence caution" evidence="2">
    <conflict type="frameshift">
        <sequence resource="EMBL-CDS" id="AAC37017"/>
    </conflict>
</comment>
<protein>
    <recommendedName>
        <fullName evidence="1">2-succinylbenzoate--CoA ligase</fullName>
        <ecNumber evidence="1">6.2.1.26</ecNumber>
    </recommendedName>
    <alternativeName>
        <fullName evidence="1">o-succinylbenzoyl-CoA synthetase</fullName>
        <shortName evidence="1">OSB-CoA synthetase</shortName>
    </alternativeName>
</protein>